<evidence type="ECO:0000255" key="1">
    <source>
        <dbReference type="HAMAP-Rule" id="MF_00182"/>
    </source>
</evidence>
<evidence type="ECO:0000256" key="2">
    <source>
        <dbReference type="SAM" id="MobiDB-lite"/>
    </source>
</evidence>
<organism>
    <name type="scientific">Cereibacter sphaeroides (strain KD131 / KCTC 12085)</name>
    <name type="common">Rhodobacter sphaeroides</name>
    <dbReference type="NCBI Taxonomy" id="557760"/>
    <lineage>
        <taxon>Bacteria</taxon>
        <taxon>Pseudomonadati</taxon>
        <taxon>Pseudomonadota</taxon>
        <taxon>Alphaproteobacteria</taxon>
        <taxon>Rhodobacterales</taxon>
        <taxon>Paracoccaceae</taxon>
        <taxon>Cereibacter</taxon>
    </lineage>
</organism>
<name>FMT_CERSK</name>
<dbReference type="EC" id="2.1.2.9" evidence="1"/>
<dbReference type="EMBL" id="CP001150">
    <property type="protein sequence ID" value="ACM02108.1"/>
    <property type="molecule type" value="Genomic_DNA"/>
</dbReference>
<dbReference type="RefSeq" id="WP_015921293.1">
    <property type="nucleotide sequence ID" value="NC_011963.1"/>
</dbReference>
<dbReference type="SMR" id="B9KML7"/>
<dbReference type="GeneID" id="67447631"/>
<dbReference type="KEGG" id="rsk:RSKD131_2248"/>
<dbReference type="HOGENOM" id="CLU_033347_1_2_5"/>
<dbReference type="GO" id="GO:0005829">
    <property type="term" value="C:cytosol"/>
    <property type="evidence" value="ECO:0007669"/>
    <property type="project" value="TreeGrafter"/>
</dbReference>
<dbReference type="GO" id="GO:0004479">
    <property type="term" value="F:methionyl-tRNA formyltransferase activity"/>
    <property type="evidence" value="ECO:0007669"/>
    <property type="project" value="UniProtKB-UniRule"/>
</dbReference>
<dbReference type="CDD" id="cd08646">
    <property type="entry name" value="FMT_core_Met-tRNA-FMT_N"/>
    <property type="match status" value="1"/>
</dbReference>
<dbReference type="CDD" id="cd08704">
    <property type="entry name" value="Met_tRNA_FMT_C"/>
    <property type="match status" value="1"/>
</dbReference>
<dbReference type="FunFam" id="3.40.50.12230:FF:000001">
    <property type="entry name" value="Methionyl-tRNA formyltransferase"/>
    <property type="match status" value="1"/>
</dbReference>
<dbReference type="Gene3D" id="3.40.50.12230">
    <property type="match status" value="1"/>
</dbReference>
<dbReference type="HAMAP" id="MF_00182">
    <property type="entry name" value="Formyl_trans"/>
    <property type="match status" value="1"/>
</dbReference>
<dbReference type="InterPro" id="IPR005794">
    <property type="entry name" value="Fmt"/>
</dbReference>
<dbReference type="InterPro" id="IPR005793">
    <property type="entry name" value="Formyl_trans_C"/>
</dbReference>
<dbReference type="InterPro" id="IPR002376">
    <property type="entry name" value="Formyl_transf_N"/>
</dbReference>
<dbReference type="InterPro" id="IPR036477">
    <property type="entry name" value="Formyl_transf_N_sf"/>
</dbReference>
<dbReference type="InterPro" id="IPR011034">
    <property type="entry name" value="Formyl_transferase-like_C_sf"/>
</dbReference>
<dbReference type="InterPro" id="IPR001555">
    <property type="entry name" value="GART_AS"/>
</dbReference>
<dbReference type="InterPro" id="IPR044135">
    <property type="entry name" value="Met-tRNA-FMT_C"/>
</dbReference>
<dbReference type="InterPro" id="IPR041711">
    <property type="entry name" value="Met-tRNA-FMT_N"/>
</dbReference>
<dbReference type="NCBIfam" id="TIGR00460">
    <property type="entry name" value="fmt"/>
    <property type="match status" value="1"/>
</dbReference>
<dbReference type="PANTHER" id="PTHR11138">
    <property type="entry name" value="METHIONYL-TRNA FORMYLTRANSFERASE"/>
    <property type="match status" value="1"/>
</dbReference>
<dbReference type="PANTHER" id="PTHR11138:SF5">
    <property type="entry name" value="METHIONYL-TRNA FORMYLTRANSFERASE, MITOCHONDRIAL"/>
    <property type="match status" value="1"/>
</dbReference>
<dbReference type="Pfam" id="PF02911">
    <property type="entry name" value="Formyl_trans_C"/>
    <property type="match status" value="1"/>
</dbReference>
<dbReference type="Pfam" id="PF00551">
    <property type="entry name" value="Formyl_trans_N"/>
    <property type="match status" value="1"/>
</dbReference>
<dbReference type="SUPFAM" id="SSF50486">
    <property type="entry name" value="FMT C-terminal domain-like"/>
    <property type="match status" value="1"/>
</dbReference>
<dbReference type="SUPFAM" id="SSF53328">
    <property type="entry name" value="Formyltransferase"/>
    <property type="match status" value="1"/>
</dbReference>
<dbReference type="PROSITE" id="PS00373">
    <property type="entry name" value="GART"/>
    <property type="match status" value="1"/>
</dbReference>
<feature type="chain" id="PRO_1000190036" description="Methionyl-tRNA formyltransferase">
    <location>
        <begin position="1"/>
        <end position="302"/>
    </location>
</feature>
<feature type="region of interest" description="Disordered" evidence="2">
    <location>
        <begin position="276"/>
        <end position="302"/>
    </location>
</feature>
<feature type="compositionally biased region" description="Basic and acidic residues" evidence="2">
    <location>
        <begin position="276"/>
        <end position="288"/>
    </location>
</feature>
<feature type="binding site" evidence="1">
    <location>
        <begin position="108"/>
        <end position="111"/>
    </location>
    <ligand>
        <name>(6S)-5,6,7,8-tetrahydrofolate</name>
        <dbReference type="ChEBI" id="CHEBI:57453"/>
    </ligand>
</feature>
<keyword id="KW-0648">Protein biosynthesis</keyword>
<keyword id="KW-0808">Transferase</keyword>
<sequence length="302" mass="32305">MRLIFMGSPDFSVPVLEALHAHHEVVCVYCQPPRPAGRGKKDRPTPVQTRAEELGLPVRHPTSLRTPEAQAEFAALGAEAAVVVAYGLILPQPILDAPERGCLNIHASLLPRWRGAAPIHRAILAGDAETGICIMQMEAGLDTGPVLMCEKTHIGPEETVQDLHDRLSDMGARLILGALGALDDLVPCPQPDAGVTYAEKIAKAEAGIDWTRPAAEIDRQIRGLSPFPGAWTLLNGERVKLLRCRQAEGQGAPGAVLPGLTIACGTGAVEITLAQREGKRPMEPEEFLRGFPLPEGSRAHTA</sequence>
<accession>B9KML7</accession>
<gene>
    <name evidence="1" type="primary">fmt</name>
    <name type="ordered locus">RSKD131_2248</name>
</gene>
<proteinExistence type="inferred from homology"/>
<comment type="function">
    <text evidence="1">Attaches a formyl group to the free amino group of methionyl-tRNA(fMet). The formyl group appears to play a dual role in the initiator identity of N-formylmethionyl-tRNA by promoting its recognition by IF2 and preventing the misappropriation of this tRNA by the elongation apparatus.</text>
</comment>
<comment type="catalytic activity">
    <reaction evidence="1">
        <text>L-methionyl-tRNA(fMet) + (6R)-10-formyltetrahydrofolate = N-formyl-L-methionyl-tRNA(fMet) + (6S)-5,6,7,8-tetrahydrofolate + H(+)</text>
        <dbReference type="Rhea" id="RHEA:24380"/>
        <dbReference type="Rhea" id="RHEA-COMP:9952"/>
        <dbReference type="Rhea" id="RHEA-COMP:9953"/>
        <dbReference type="ChEBI" id="CHEBI:15378"/>
        <dbReference type="ChEBI" id="CHEBI:57453"/>
        <dbReference type="ChEBI" id="CHEBI:78530"/>
        <dbReference type="ChEBI" id="CHEBI:78844"/>
        <dbReference type="ChEBI" id="CHEBI:195366"/>
        <dbReference type="EC" id="2.1.2.9"/>
    </reaction>
</comment>
<comment type="similarity">
    <text evidence="1">Belongs to the Fmt family.</text>
</comment>
<reference key="1">
    <citation type="journal article" date="2009" name="J. Bacteriol.">
        <title>Complete genome sequence of Rhodobacter sphaeroides KD131.</title>
        <authorList>
            <person name="Lim S.-K."/>
            <person name="Kim S.J."/>
            <person name="Cha S.H."/>
            <person name="Oh Y.-K."/>
            <person name="Rhee H.-J."/>
            <person name="Kim M.-S."/>
            <person name="Lee J.K."/>
        </authorList>
    </citation>
    <scope>NUCLEOTIDE SEQUENCE [LARGE SCALE GENOMIC DNA]</scope>
    <source>
        <strain>KD131 / KCTC 12085</strain>
    </source>
</reference>
<protein>
    <recommendedName>
        <fullName evidence="1">Methionyl-tRNA formyltransferase</fullName>
        <ecNumber evidence="1">2.1.2.9</ecNumber>
    </recommendedName>
</protein>